<protein>
    <recommendedName>
        <fullName evidence="1">NAD(P)H-quinone oxidoreductase subunit K, chloroplastic</fullName>
        <ecNumber evidence="1">7.1.1.-</ecNumber>
    </recommendedName>
    <alternativeName>
        <fullName evidence="1">NAD(P)H dehydrogenase subunit K</fullName>
    </alternativeName>
    <alternativeName>
        <fullName evidence="1">NADH-plastoquinone oxidoreductase subunit K</fullName>
    </alternativeName>
</protein>
<dbReference type="EC" id="7.1.1.-" evidence="1"/>
<dbReference type="EMBL" id="EU549769">
    <property type="protein sequence ID" value="ACB86531.1"/>
    <property type="molecule type" value="Genomic_DNA"/>
</dbReference>
<dbReference type="RefSeq" id="YP_001837364.1">
    <property type="nucleotide sequence ID" value="NC_010601.1"/>
</dbReference>
<dbReference type="SMR" id="B2LMJ7"/>
<dbReference type="GeneID" id="6219143"/>
<dbReference type="GO" id="GO:0009535">
    <property type="term" value="C:chloroplast thylakoid membrane"/>
    <property type="evidence" value="ECO:0007669"/>
    <property type="project" value="UniProtKB-SubCell"/>
</dbReference>
<dbReference type="GO" id="GO:0045271">
    <property type="term" value="C:respiratory chain complex I"/>
    <property type="evidence" value="ECO:0007669"/>
    <property type="project" value="TreeGrafter"/>
</dbReference>
<dbReference type="GO" id="GO:0051539">
    <property type="term" value="F:4 iron, 4 sulfur cluster binding"/>
    <property type="evidence" value="ECO:0007669"/>
    <property type="project" value="UniProtKB-KW"/>
</dbReference>
<dbReference type="GO" id="GO:0005506">
    <property type="term" value="F:iron ion binding"/>
    <property type="evidence" value="ECO:0007669"/>
    <property type="project" value="UniProtKB-UniRule"/>
</dbReference>
<dbReference type="GO" id="GO:0008137">
    <property type="term" value="F:NADH dehydrogenase (ubiquinone) activity"/>
    <property type="evidence" value="ECO:0007669"/>
    <property type="project" value="InterPro"/>
</dbReference>
<dbReference type="GO" id="GO:0048038">
    <property type="term" value="F:quinone binding"/>
    <property type="evidence" value="ECO:0007669"/>
    <property type="project" value="UniProtKB-KW"/>
</dbReference>
<dbReference type="GO" id="GO:0009060">
    <property type="term" value="P:aerobic respiration"/>
    <property type="evidence" value="ECO:0007669"/>
    <property type="project" value="TreeGrafter"/>
</dbReference>
<dbReference type="GO" id="GO:0015990">
    <property type="term" value="P:electron transport coupled proton transport"/>
    <property type="evidence" value="ECO:0007669"/>
    <property type="project" value="TreeGrafter"/>
</dbReference>
<dbReference type="GO" id="GO:0019684">
    <property type="term" value="P:photosynthesis, light reaction"/>
    <property type="evidence" value="ECO:0007669"/>
    <property type="project" value="UniProtKB-UniRule"/>
</dbReference>
<dbReference type="FunFam" id="3.40.50.12280:FF:000003">
    <property type="entry name" value="NAD(P)H-quinone oxidoreductase subunit K, chloroplastic"/>
    <property type="match status" value="1"/>
</dbReference>
<dbReference type="Gene3D" id="3.40.50.12280">
    <property type="match status" value="1"/>
</dbReference>
<dbReference type="HAMAP" id="MF_01356">
    <property type="entry name" value="NDH1_NuoB"/>
    <property type="match status" value="1"/>
</dbReference>
<dbReference type="InterPro" id="IPR006137">
    <property type="entry name" value="NADH_UbQ_OxRdtase-like_20kDa"/>
</dbReference>
<dbReference type="InterPro" id="IPR006138">
    <property type="entry name" value="NADH_UQ_OxRdtase_20Kd_su"/>
</dbReference>
<dbReference type="NCBIfam" id="TIGR01957">
    <property type="entry name" value="nuoB_fam"/>
    <property type="match status" value="1"/>
</dbReference>
<dbReference type="NCBIfam" id="NF005012">
    <property type="entry name" value="PRK06411.1"/>
    <property type="match status" value="1"/>
</dbReference>
<dbReference type="PANTHER" id="PTHR11995">
    <property type="entry name" value="NADH DEHYDROGENASE"/>
    <property type="match status" value="1"/>
</dbReference>
<dbReference type="PANTHER" id="PTHR11995:SF14">
    <property type="entry name" value="NADH DEHYDROGENASE [UBIQUINONE] IRON-SULFUR PROTEIN 7, MITOCHONDRIAL"/>
    <property type="match status" value="1"/>
</dbReference>
<dbReference type="Pfam" id="PF01058">
    <property type="entry name" value="Oxidored_q6"/>
    <property type="match status" value="1"/>
</dbReference>
<dbReference type="SUPFAM" id="SSF56770">
    <property type="entry name" value="HydA/Nqo6-like"/>
    <property type="match status" value="1"/>
</dbReference>
<dbReference type="PROSITE" id="PS01150">
    <property type="entry name" value="COMPLEX1_20K"/>
    <property type="match status" value="1"/>
</dbReference>
<organism>
    <name type="scientific">Guizotia abyssinica</name>
    <name type="common">Niger</name>
    <name type="synonym">Ramtilla</name>
    <dbReference type="NCBI Taxonomy" id="4230"/>
    <lineage>
        <taxon>Eukaryota</taxon>
        <taxon>Viridiplantae</taxon>
        <taxon>Streptophyta</taxon>
        <taxon>Embryophyta</taxon>
        <taxon>Tracheophyta</taxon>
        <taxon>Spermatophyta</taxon>
        <taxon>Magnoliopsida</taxon>
        <taxon>eudicotyledons</taxon>
        <taxon>Gunneridae</taxon>
        <taxon>Pentapetalae</taxon>
        <taxon>asterids</taxon>
        <taxon>campanulids</taxon>
        <taxon>Asterales</taxon>
        <taxon>Asteraceae</taxon>
        <taxon>Asteroideae</taxon>
        <taxon>Heliantheae alliance</taxon>
        <taxon>Millerieae</taxon>
        <taxon>Guizotia</taxon>
    </lineage>
</organism>
<evidence type="ECO:0000255" key="1">
    <source>
        <dbReference type="HAMAP-Rule" id="MF_01356"/>
    </source>
</evidence>
<proteinExistence type="inferred from homology"/>
<name>NDHK_GUIAB</name>
<feature type="chain" id="PRO_0000358547" description="NAD(P)H-quinone oxidoreductase subunit K, chloroplastic">
    <location>
        <begin position="1"/>
        <end position="225"/>
    </location>
</feature>
<feature type="binding site" evidence="1">
    <location>
        <position position="43"/>
    </location>
    <ligand>
        <name>[4Fe-4S] cluster</name>
        <dbReference type="ChEBI" id="CHEBI:49883"/>
    </ligand>
</feature>
<feature type="binding site" evidence="1">
    <location>
        <position position="44"/>
    </location>
    <ligand>
        <name>[4Fe-4S] cluster</name>
        <dbReference type="ChEBI" id="CHEBI:49883"/>
    </ligand>
</feature>
<feature type="binding site" evidence="1">
    <location>
        <position position="108"/>
    </location>
    <ligand>
        <name>[4Fe-4S] cluster</name>
        <dbReference type="ChEBI" id="CHEBI:49883"/>
    </ligand>
</feature>
<feature type="binding site" evidence="1">
    <location>
        <position position="139"/>
    </location>
    <ligand>
        <name>[4Fe-4S] cluster</name>
        <dbReference type="ChEBI" id="CHEBI:49883"/>
    </ligand>
</feature>
<comment type="function">
    <text evidence="1">NDH shuttles electrons from NAD(P)H:plastoquinone, via FMN and iron-sulfur (Fe-S) centers, to quinones in the photosynthetic chain and possibly in a chloroplast respiratory chain. The immediate electron acceptor for the enzyme in this species is believed to be plastoquinone. Couples the redox reaction to proton translocation, and thus conserves the redox energy in a proton gradient.</text>
</comment>
<comment type="catalytic activity">
    <reaction evidence="1">
        <text>a plastoquinone + NADH + (n+1) H(+)(in) = a plastoquinol + NAD(+) + n H(+)(out)</text>
        <dbReference type="Rhea" id="RHEA:42608"/>
        <dbReference type="Rhea" id="RHEA-COMP:9561"/>
        <dbReference type="Rhea" id="RHEA-COMP:9562"/>
        <dbReference type="ChEBI" id="CHEBI:15378"/>
        <dbReference type="ChEBI" id="CHEBI:17757"/>
        <dbReference type="ChEBI" id="CHEBI:57540"/>
        <dbReference type="ChEBI" id="CHEBI:57945"/>
        <dbReference type="ChEBI" id="CHEBI:62192"/>
    </reaction>
</comment>
<comment type="catalytic activity">
    <reaction evidence="1">
        <text>a plastoquinone + NADPH + (n+1) H(+)(in) = a plastoquinol + NADP(+) + n H(+)(out)</text>
        <dbReference type="Rhea" id="RHEA:42612"/>
        <dbReference type="Rhea" id="RHEA-COMP:9561"/>
        <dbReference type="Rhea" id="RHEA-COMP:9562"/>
        <dbReference type="ChEBI" id="CHEBI:15378"/>
        <dbReference type="ChEBI" id="CHEBI:17757"/>
        <dbReference type="ChEBI" id="CHEBI:57783"/>
        <dbReference type="ChEBI" id="CHEBI:58349"/>
        <dbReference type="ChEBI" id="CHEBI:62192"/>
    </reaction>
</comment>
<comment type="cofactor">
    <cofactor evidence="1">
        <name>[4Fe-4S] cluster</name>
        <dbReference type="ChEBI" id="CHEBI:49883"/>
    </cofactor>
    <text evidence="1">Binds 1 [4Fe-4S] cluster.</text>
</comment>
<comment type="subunit">
    <text evidence="1">NDH is composed of at least 16 different subunits, 5 of which are encoded in the nucleus.</text>
</comment>
<comment type="subcellular location">
    <subcellularLocation>
        <location evidence="1">Plastid</location>
        <location evidence="1">Chloroplast thylakoid membrane</location>
        <topology evidence="1">Peripheral membrane protein</topology>
        <orientation evidence="1">Stromal side</orientation>
    </subcellularLocation>
</comment>
<comment type="similarity">
    <text evidence="1">Belongs to the complex I 20 kDa subunit family.</text>
</comment>
<reference key="1">
    <citation type="submission" date="2008-03" db="EMBL/GenBank/DDBJ databases">
        <title>Guizotia abyssinica chloroplast sequenced using Solexa.</title>
        <authorList>
            <person name="Kane N.C."/>
            <person name="Dempewolf H."/>
            <person name="Stewart M.L."/>
            <person name="Cronk Q."/>
            <person name="Rieseberrg L.H."/>
        </authorList>
    </citation>
    <scope>NUCLEOTIDE SEQUENCE [LARGE SCALE GENOMIC DNA]</scope>
    <source>
        <strain>cv. PI 508077</strain>
    </source>
</reference>
<geneLocation type="chloroplast"/>
<gene>
    <name evidence="1" type="primary">ndhK</name>
    <name type="ordered locus">GuabCp025</name>
</gene>
<accession>B2LMJ7</accession>
<keyword id="KW-0004">4Fe-4S</keyword>
<keyword id="KW-0150">Chloroplast</keyword>
<keyword id="KW-0408">Iron</keyword>
<keyword id="KW-0411">Iron-sulfur</keyword>
<keyword id="KW-0472">Membrane</keyword>
<keyword id="KW-0479">Metal-binding</keyword>
<keyword id="KW-0520">NAD</keyword>
<keyword id="KW-0521">NADP</keyword>
<keyword id="KW-0934">Plastid</keyword>
<keyword id="KW-0618">Plastoquinone</keyword>
<keyword id="KW-0874">Quinone</keyword>
<keyword id="KW-0793">Thylakoid</keyword>
<keyword id="KW-1278">Translocase</keyword>
<keyword id="KW-0813">Transport</keyword>
<sequence length="225" mass="25392">MNSIEFPLFHRTTQNSVISTTLNDLSNWSRLSSLWPLLYGTSCCFIEFASLIGSRFDFDRYGLVPRSSPRQADLILTAGTVTMKMAPSLVRLYEQMPEPKYVIAMGACTITGGMFSTDSYSTVRGVDKLIPVDVYLPGCPPKPEAIIDAITKLRKKISREIYPDRILSQRENRCFTTNHKFQVGHSIHTGNYDQGFLYQPPSTSEIPPETFFKYKSSVSSHELVN</sequence>